<reference key="1">
    <citation type="submission" date="2009-06" db="EMBL/GenBank/DDBJ databases">
        <title>Complete sequence of Desulfovibrio salexigens DSM 2638.</title>
        <authorList>
            <consortium name="US DOE Joint Genome Institute"/>
            <person name="Lucas S."/>
            <person name="Copeland A."/>
            <person name="Lapidus A."/>
            <person name="Glavina del Rio T."/>
            <person name="Tice H."/>
            <person name="Bruce D."/>
            <person name="Goodwin L."/>
            <person name="Pitluck S."/>
            <person name="Munk A.C."/>
            <person name="Brettin T."/>
            <person name="Detter J.C."/>
            <person name="Han C."/>
            <person name="Tapia R."/>
            <person name="Larimer F."/>
            <person name="Land M."/>
            <person name="Hauser L."/>
            <person name="Kyrpides N."/>
            <person name="Anderson I."/>
            <person name="Wall J.D."/>
            <person name="Arkin A.P."/>
            <person name="Dehal P."/>
            <person name="Chivian D."/>
            <person name="Giles B."/>
            <person name="Hazen T.C."/>
        </authorList>
    </citation>
    <scope>NUCLEOTIDE SEQUENCE [LARGE SCALE GENOMIC DNA]</scope>
    <source>
        <strain>ATCC 14822 / DSM 2638 / NCIMB 8403 / VKM B-1763</strain>
    </source>
</reference>
<keyword id="KW-0028">Amino-acid biosynthesis</keyword>
<keyword id="KW-0100">Branched-chain amino acid biosynthesis</keyword>
<keyword id="KW-0460">Magnesium</keyword>
<keyword id="KW-0479">Metal-binding</keyword>
<keyword id="KW-0521">NADP</keyword>
<keyword id="KW-0560">Oxidoreductase</keyword>
<keyword id="KW-1185">Reference proteome</keyword>
<protein>
    <recommendedName>
        <fullName evidence="1">Ketol-acid reductoisomerase (NADP(+))</fullName>
        <shortName evidence="1">KARI</shortName>
        <ecNumber evidence="1">1.1.1.86</ecNumber>
    </recommendedName>
    <alternativeName>
        <fullName evidence="1">Acetohydroxy-acid isomeroreductase</fullName>
        <shortName evidence="1">AHIR</shortName>
    </alternativeName>
    <alternativeName>
        <fullName evidence="1">Alpha-keto-beta-hydroxylacyl reductoisomerase</fullName>
    </alternativeName>
    <alternativeName>
        <fullName evidence="1">Ketol-acid reductoisomerase type 1</fullName>
    </alternativeName>
    <alternativeName>
        <fullName evidence="1">Ketol-acid reductoisomerase type I</fullName>
    </alternativeName>
</protein>
<name>ILVC_MARSD</name>
<dbReference type="EC" id="1.1.1.86" evidence="1"/>
<dbReference type="EMBL" id="CP001649">
    <property type="protein sequence ID" value="ACS80452.1"/>
    <property type="molecule type" value="Genomic_DNA"/>
</dbReference>
<dbReference type="RefSeq" id="WP_015852268.1">
    <property type="nucleotide sequence ID" value="NC_012881.1"/>
</dbReference>
<dbReference type="SMR" id="C6BXE6"/>
<dbReference type="STRING" id="526222.Desal_2396"/>
<dbReference type="KEGG" id="dsa:Desal_2396"/>
<dbReference type="eggNOG" id="COG0059">
    <property type="taxonomic scope" value="Bacteria"/>
</dbReference>
<dbReference type="HOGENOM" id="CLU_033821_0_1_7"/>
<dbReference type="OrthoDB" id="9804088at2"/>
<dbReference type="UniPathway" id="UPA00047">
    <property type="reaction ID" value="UER00056"/>
</dbReference>
<dbReference type="UniPathway" id="UPA00049">
    <property type="reaction ID" value="UER00060"/>
</dbReference>
<dbReference type="Proteomes" id="UP000002601">
    <property type="component" value="Chromosome"/>
</dbReference>
<dbReference type="GO" id="GO:0005829">
    <property type="term" value="C:cytosol"/>
    <property type="evidence" value="ECO:0007669"/>
    <property type="project" value="TreeGrafter"/>
</dbReference>
<dbReference type="GO" id="GO:0004455">
    <property type="term" value="F:ketol-acid reductoisomerase activity"/>
    <property type="evidence" value="ECO:0007669"/>
    <property type="project" value="UniProtKB-UniRule"/>
</dbReference>
<dbReference type="GO" id="GO:0000287">
    <property type="term" value="F:magnesium ion binding"/>
    <property type="evidence" value="ECO:0007669"/>
    <property type="project" value="UniProtKB-UniRule"/>
</dbReference>
<dbReference type="GO" id="GO:0050661">
    <property type="term" value="F:NADP binding"/>
    <property type="evidence" value="ECO:0007669"/>
    <property type="project" value="InterPro"/>
</dbReference>
<dbReference type="GO" id="GO:0009097">
    <property type="term" value="P:isoleucine biosynthetic process"/>
    <property type="evidence" value="ECO:0007669"/>
    <property type="project" value="UniProtKB-UniRule"/>
</dbReference>
<dbReference type="GO" id="GO:0009099">
    <property type="term" value="P:L-valine biosynthetic process"/>
    <property type="evidence" value="ECO:0007669"/>
    <property type="project" value="UniProtKB-UniRule"/>
</dbReference>
<dbReference type="FunFam" id="3.40.50.720:FF:000023">
    <property type="entry name" value="Ketol-acid reductoisomerase (NADP(+))"/>
    <property type="match status" value="1"/>
</dbReference>
<dbReference type="Gene3D" id="6.10.240.10">
    <property type="match status" value="1"/>
</dbReference>
<dbReference type="Gene3D" id="3.40.50.720">
    <property type="entry name" value="NAD(P)-binding Rossmann-like Domain"/>
    <property type="match status" value="1"/>
</dbReference>
<dbReference type="HAMAP" id="MF_00435">
    <property type="entry name" value="IlvC"/>
    <property type="match status" value="1"/>
</dbReference>
<dbReference type="InterPro" id="IPR008927">
    <property type="entry name" value="6-PGluconate_DH-like_C_sf"/>
</dbReference>
<dbReference type="InterPro" id="IPR013023">
    <property type="entry name" value="KARI"/>
</dbReference>
<dbReference type="InterPro" id="IPR000506">
    <property type="entry name" value="KARI_C"/>
</dbReference>
<dbReference type="InterPro" id="IPR013116">
    <property type="entry name" value="KARI_N"/>
</dbReference>
<dbReference type="InterPro" id="IPR014359">
    <property type="entry name" value="KARI_prok"/>
</dbReference>
<dbReference type="InterPro" id="IPR036291">
    <property type="entry name" value="NAD(P)-bd_dom_sf"/>
</dbReference>
<dbReference type="NCBIfam" id="TIGR00465">
    <property type="entry name" value="ilvC"/>
    <property type="match status" value="1"/>
</dbReference>
<dbReference type="NCBIfam" id="NF004017">
    <property type="entry name" value="PRK05479.1"/>
    <property type="match status" value="1"/>
</dbReference>
<dbReference type="NCBIfam" id="NF009940">
    <property type="entry name" value="PRK13403.1"/>
    <property type="match status" value="1"/>
</dbReference>
<dbReference type="PANTHER" id="PTHR21371">
    <property type="entry name" value="KETOL-ACID REDUCTOISOMERASE, MITOCHONDRIAL"/>
    <property type="match status" value="1"/>
</dbReference>
<dbReference type="PANTHER" id="PTHR21371:SF1">
    <property type="entry name" value="KETOL-ACID REDUCTOISOMERASE, MITOCHONDRIAL"/>
    <property type="match status" value="1"/>
</dbReference>
<dbReference type="Pfam" id="PF01450">
    <property type="entry name" value="KARI_C"/>
    <property type="match status" value="1"/>
</dbReference>
<dbReference type="Pfam" id="PF07991">
    <property type="entry name" value="KARI_N"/>
    <property type="match status" value="1"/>
</dbReference>
<dbReference type="PIRSF" id="PIRSF000116">
    <property type="entry name" value="IlvC_gammaproteo"/>
    <property type="match status" value="1"/>
</dbReference>
<dbReference type="SUPFAM" id="SSF48179">
    <property type="entry name" value="6-phosphogluconate dehydrogenase C-terminal domain-like"/>
    <property type="match status" value="1"/>
</dbReference>
<dbReference type="SUPFAM" id="SSF51735">
    <property type="entry name" value="NAD(P)-binding Rossmann-fold domains"/>
    <property type="match status" value="1"/>
</dbReference>
<dbReference type="PROSITE" id="PS51851">
    <property type="entry name" value="KARI_C"/>
    <property type="match status" value="1"/>
</dbReference>
<dbReference type="PROSITE" id="PS51850">
    <property type="entry name" value="KARI_N"/>
    <property type="match status" value="1"/>
</dbReference>
<gene>
    <name evidence="1" type="primary">ilvC</name>
    <name type="ordered locus">Desal_2396</name>
</gene>
<evidence type="ECO:0000255" key="1">
    <source>
        <dbReference type="HAMAP-Rule" id="MF_00435"/>
    </source>
</evidence>
<evidence type="ECO:0000255" key="2">
    <source>
        <dbReference type="PROSITE-ProRule" id="PRU01197"/>
    </source>
</evidence>
<evidence type="ECO:0000255" key="3">
    <source>
        <dbReference type="PROSITE-ProRule" id="PRU01198"/>
    </source>
</evidence>
<comment type="function">
    <text evidence="1">Involved in the biosynthesis of branched-chain amino acids (BCAA). Catalyzes an alkyl-migration followed by a ketol-acid reduction of (S)-2-acetolactate (S2AL) to yield (R)-2,3-dihydroxy-isovalerate. In the isomerase reaction, S2AL is rearranged via a Mg-dependent methyl migration to produce 3-hydroxy-3-methyl-2-ketobutyrate (HMKB). In the reductase reaction, this 2-ketoacid undergoes a metal-dependent reduction by NADPH to yield (R)-2,3-dihydroxy-isovalerate.</text>
</comment>
<comment type="catalytic activity">
    <reaction evidence="1">
        <text>(2R)-2,3-dihydroxy-3-methylbutanoate + NADP(+) = (2S)-2-acetolactate + NADPH + H(+)</text>
        <dbReference type="Rhea" id="RHEA:22068"/>
        <dbReference type="ChEBI" id="CHEBI:15378"/>
        <dbReference type="ChEBI" id="CHEBI:49072"/>
        <dbReference type="ChEBI" id="CHEBI:57783"/>
        <dbReference type="ChEBI" id="CHEBI:58349"/>
        <dbReference type="ChEBI" id="CHEBI:58476"/>
        <dbReference type="EC" id="1.1.1.86"/>
    </reaction>
</comment>
<comment type="catalytic activity">
    <reaction evidence="1">
        <text>(2R,3R)-2,3-dihydroxy-3-methylpentanoate + NADP(+) = (S)-2-ethyl-2-hydroxy-3-oxobutanoate + NADPH + H(+)</text>
        <dbReference type="Rhea" id="RHEA:13493"/>
        <dbReference type="ChEBI" id="CHEBI:15378"/>
        <dbReference type="ChEBI" id="CHEBI:49256"/>
        <dbReference type="ChEBI" id="CHEBI:49258"/>
        <dbReference type="ChEBI" id="CHEBI:57783"/>
        <dbReference type="ChEBI" id="CHEBI:58349"/>
        <dbReference type="EC" id="1.1.1.86"/>
    </reaction>
</comment>
<comment type="cofactor">
    <cofactor evidence="1">
        <name>Mg(2+)</name>
        <dbReference type="ChEBI" id="CHEBI:18420"/>
    </cofactor>
    <text evidence="1">Binds 2 magnesium ions per subunit.</text>
</comment>
<comment type="pathway">
    <text evidence="1">Amino-acid biosynthesis; L-isoleucine biosynthesis; L-isoleucine from 2-oxobutanoate: step 2/4.</text>
</comment>
<comment type="pathway">
    <text evidence="1">Amino-acid biosynthesis; L-valine biosynthesis; L-valine from pyruvate: step 2/4.</text>
</comment>
<comment type="similarity">
    <text evidence="1">Belongs to the ketol-acid reductoisomerase family.</text>
</comment>
<proteinExistence type="inferred from homology"/>
<feature type="chain" id="PRO_1000206079" description="Ketol-acid reductoisomerase (NADP(+))">
    <location>
        <begin position="1"/>
        <end position="329"/>
    </location>
</feature>
<feature type="domain" description="KARI N-terminal Rossmann" evidence="2">
    <location>
        <begin position="1"/>
        <end position="181"/>
    </location>
</feature>
<feature type="domain" description="KARI C-terminal knotted" evidence="3">
    <location>
        <begin position="182"/>
        <end position="327"/>
    </location>
</feature>
<feature type="active site" evidence="1">
    <location>
        <position position="107"/>
    </location>
</feature>
<feature type="binding site" evidence="1">
    <location>
        <begin position="24"/>
        <end position="27"/>
    </location>
    <ligand>
        <name>NADP(+)</name>
        <dbReference type="ChEBI" id="CHEBI:58349"/>
    </ligand>
</feature>
<feature type="binding site" evidence="1">
    <location>
        <position position="47"/>
    </location>
    <ligand>
        <name>NADP(+)</name>
        <dbReference type="ChEBI" id="CHEBI:58349"/>
    </ligand>
</feature>
<feature type="binding site" evidence="1">
    <location>
        <begin position="82"/>
        <end position="85"/>
    </location>
    <ligand>
        <name>NADP(+)</name>
        <dbReference type="ChEBI" id="CHEBI:58349"/>
    </ligand>
</feature>
<feature type="binding site" evidence="1">
    <location>
        <position position="133"/>
    </location>
    <ligand>
        <name>NADP(+)</name>
        <dbReference type="ChEBI" id="CHEBI:58349"/>
    </ligand>
</feature>
<feature type="binding site" evidence="1">
    <location>
        <position position="190"/>
    </location>
    <ligand>
        <name>Mg(2+)</name>
        <dbReference type="ChEBI" id="CHEBI:18420"/>
        <label>1</label>
    </ligand>
</feature>
<feature type="binding site" evidence="1">
    <location>
        <position position="190"/>
    </location>
    <ligand>
        <name>Mg(2+)</name>
        <dbReference type="ChEBI" id="CHEBI:18420"/>
        <label>2</label>
    </ligand>
</feature>
<feature type="binding site" evidence="1">
    <location>
        <position position="194"/>
    </location>
    <ligand>
        <name>Mg(2+)</name>
        <dbReference type="ChEBI" id="CHEBI:18420"/>
        <label>1</label>
    </ligand>
</feature>
<feature type="binding site" evidence="1">
    <location>
        <position position="226"/>
    </location>
    <ligand>
        <name>Mg(2+)</name>
        <dbReference type="ChEBI" id="CHEBI:18420"/>
        <label>2</label>
    </ligand>
</feature>
<feature type="binding site" evidence="1">
    <location>
        <position position="230"/>
    </location>
    <ligand>
        <name>Mg(2+)</name>
        <dbReference type="ChEBI" id="CHEBI:18420"/>
        <label>2</label>
    </ligand>
</feature>
<feature type="binding site" evidence="1">
    <location>
        <position position="251"/>
    </location>
    <ligand>
        <name>substrate</name>
    </ligand>
</feature>
<sequence>MKVYYENDADLNLLKDKTVAIIGYGSQGHAHAQNLRDSGVKVVVGQRPGGANYELAKEHGFEPVSAAEAAAQADLIMILLPDQVQAEVYKNDIAPNLKSGDVLAFGHGFNIHFEQIAPPADVDVIMAAPKGPGHLVRRTYTEGGAVPAIIAVDQDASGKAFDIALAYAKGIGATRSGVLQTTFREETETDLFGEQAVLCGGLSELIKAGFETLVEAGYQPEIAYFECLHECKLIIDLIYEGGLAKMRDSISDTAEYGDLTRGPRVINDKSREEMKKILKEIQQGEFAREFIAENMTGKAHFSAMRRIGKEHQIEQVGGELRKMMSWLKK</sequence>
<accession>C6BXE6</accession>
<organism>
    <name type="scientific">Maridesulfovibrio salexigens (strain ATCC 14822 / DSM 2638 / NCIMB 8403 / VKM B-1763)</name>
    <name type="common">Desulfovibrio salexigens</name>
    <dbReference type="NCBI Taxonomy" id="526222"/>
    <lineage>
        <taxon>Bacteria</taxon>
        <taxon>Pseudomonadati</taxon>
        <taxon>Thermodesulfobacteriota</taxon>
        <taxon>Desulfovibrionia</taxon>
        <taxon>Desulfovibrionales</taxon>
        <taxon>Desulfovibrionaceae</taxon>
        <taxon>Maridesulfovibrio</taxon>
    </lineage>
</organism>